<comment type="function">
    <text evidence="1">Microtubule-binding protein that plays a crucial role in ensuring inner core protein localization within the centriole core, as well as in maintaining the microtubule wall integrity and the overall centriole roundness and stability. Required for efficient primary cilium formation.</text>
</comment>
<comment type="subcellular location">
    <subcellularLocation>
        <location evidence="1">Cytoplasm</location>
        <location evidence="1">Cytoskeleton</location>
        <location evidence="1">Microtubule organizing center</location>
        <location evidence="1">Centrosome</location>
        <location evidence="1">Centriole</location>
    </subcellularLocation>
    <subcellularLocation>
        <location evidence="1">Cytoplasm</location>
        <location evidence="1">Cytoskeleton</location>
        <location evidence="1">Microtubule organizing center</location>
        <location evidence="1">Centrosome</location>
        <location evidence="1">Centriolar satellite</location>
    </subcellularLocation>
    <text evidence="1">Localizes to the microtubule triplets in the central core region of centrioles and localizes to centriolar satellite in a PCM1-dependent manner.</text>
</comment>
<comment type="alternative products">
    <event type="alternative splicing"/>
    <isoform>
        <id>Q6ZPG2-1</id>
        <name>1</name>
        <sequence type="displayed"/>
    </isoform>
    <isoform>
        <id>Q6ZPG2-2</id>
        <name>2</name>
        <sequence type="described" ref="VSP_034309 VSP_034314"/>
    </isoform>
    <isoform>
        <id>Q6ZPG2-3</id>
        <name>3</name>
        <sequence type="described" ref="VSP_034310 VSP_034311 VSP_034312 VSP_034313"/>
    </isoform>
</comment>
<comment type="similarity">
    <text evidence="5">Belongs to the WD repeat WDR90/POC16 family.</text>
</comment>
<comment type="sequence caution" evidence="5">
    <conflict type="erroneous initiation">
        <sequence resource="EMBL-CDS" id="AAH25468"/>
    </conflict>
</comment>
<accession>Q6ZPG2</accession>
<accession>Q80VI2</accession>
<accession>Q8BI97</accession>
<accession>Q8R3G7</accession>
<accession>Q921X4</accession>
<feature type="chain" id="PRO_0000341413" description="WD repeat-containing protein 90">
    <location>
        <begin position="1"/>
        <end position="1874"/>
    </location>
</feature>
<feature type="repeat" description="WD 1">
    <location>
        <begin position="469"/>
        <end position="512"/>
    </location>
</feature>
<feature type="repeat" description="WD 2">
    <location>
        <begin position="514"/>
        <end position="556"/>
    </location>
</feature>
<feature type="repeat" description="WD 3">
    <location>
        <begin position="563"/>
        <end position="603"/>
    </location>
</feature>
<feature type="repeat" description="WD 4">
    <location>
        <begin position="677"/>
        <end position="716"/>
    </location>
</feature>
<feature type="repeat" description="WD 5">
    <location>
        <begin position="718"/>
        <end position="757"/>
    </location>
</feature>
<feature type="repeat" description="WD 6">
    <location>
        <begin position="760"/>
        <end position="799"/>
    </location>
</feature>
<feature type="repeat" description="WD 7">
    <location>
        <begin position="844"/>
        <end position="883"/>
    </location>
</feature>
<feature type="repeat" description="WD 8">
    <location>
        <begin position="944"/>
        <end position="984"/>
    </location>
</feature>
<feature type="repeat" description="WD 9">
    <location>
        <begin position="988"/>
        <end position="1026"/>
    </location>
</feature>
<feature type="repeat" description="WD 10">
    <location>
        <begin position="1031"/>
        <end position="1068"/>
    </location>
</feature>
<feature type="repeat" description="WD 11">
    <location>
        <begin position="1280"/>
        <end position="1325"/>
    </location>
</feature>
<feature type="repeat" description="WD 12">
    <location>
        <begin position="1328"/>
        <end position="1369"/>
    </location>
</feature>
<feature type="repeat" description="WD 13">
    <location>
        <begin position="1371"/>
        <end position="1412"/>
    </location>
</feature>
<feature type="repeat" description="WD 14">
    <location>
        <begin position="1422"/>
        <end position="1460"/>
    </location>
</feature>
<feature type="repeat" description="WD 15">
    <location>
        <begin position="1462"/>
        <end position="1500"/>
    </location>
</feature>
<feature type="repeat" description="WD 16">
    <location>
        <begin position="1559"/>
        <end position="1598"/>
    </location>
</feature>
<feature type="repeat" description="WD 17">
    <location>
        <begin position="1601"/>
        <end position="1646"/>
    </location>
</feature>
<feature type="repeat" description="WD 18">
    <location>
        <begin position="1649"/>
        <end position="1688"/>
    </location>
</feature>
<feature type="repeat" description="WD 19">
    <location>
        <begin position="1695"/>
        <end position="1740"/>
    </location>
</feature>
<feature type="repeat" description="WD 20">
    <location>
        <begin position="1800"/>
        <end position="1839"/>
    </location>
</feature>
<feature type="repeat" description="WD 21">
    <location>
        <begin position="1841"/>
        <end position="1874"/>
    </location>
</feature>
<feature type="region of interest" description="Disordered" evidence="2">
    <location>
        <begin position="1"/>
        <end position="59"/>
    </location>
</feature>
<feature type="region of interest" description="Binds with microtubules" evidence="1">
    <location>
        <begin position="59"/>
        <end position="267"/>
    </location>
</feature>
<feature type="region of interest" description="Disordered" evidence="2">
    <location>
        <begin position="1066"/>
        <end position="1132"/>
    </location>
</feature>
<feature type="region of interest" description="Disordered" evidence="2">
    <location>
        <begin position="1160"/>
        <end position="1211"/>
    </location>
</feature>
<feature type="compositionally biased region" description="Basic and acidic residues" evidence="2">
    <location>
        <begin position="1066"/>
        <end position="1075"/>
    </location>
</feature>
<feature type="modified residue" description="Phosphoserine" evidence="6">
    <location>
        <position position="16"/>
    </location>
</feature>
<feature type="modified residue" description="Phosphoserine" evidence="6">
    <location>
        <position position="20"/>
    </location>
</feature>
<feature type="modified residue" description="Phosphoserine" evidence="6">
    <location>
        <position position="301"/>
    </location>
</feature>
<feature type="splice variant" id="VSP_034309" description="In isoform 2." evidence="3">
    <location>
        <begin position="1"/>
        <end position="1110"/>
    </location>
</feature>
<feature type="splice variant" id="VSP_034310" description="In isoform 3." evidence="4">
    <location>
        <begin position="1"/>
        <end position="333"/>
    </location>
</feature>
<feature type="splice variant" id="VSP_034311" description="In isoform 3." evidence="4">
    <original>QACSSAL</original>
    <variation>MAHVPLQ</variation>
    <location>
        <begin position="334"/>
        <end position="340"/>
    </location>
</feature>
<feature type="splice variant" id="VSP_034312" description="In isoform 3." evidence="4">
    <original>EHDGPVSSV</original>
    <variation>GEIADICLP</variation>
    <location>
        <begin position="718"/>
        <end position="726"/>
    </location>
</feature>
<feature type="splice variant" id="VSP_034313" description="In isoform 3." evidence="4">
    <location>
        <begin position="727"/>
        <end position="1874"/>
    </location>
</feature>
<feature type="splice variant" id="VSP_034314" description="In isoform 2." evidence="3">
    <original>PLSSHDRLLDGST</original>
    <variation>MTGSLTAVLVLTV</variation>
    <location>
        <begin position="1111"/>
        <end position="1123"/>
    </location>
</feature>
<organism>
    <name type="scientific">Mus musculus</name>
    <name type="common">Mouse</name>
    <dbReference type="NCBI Taxonomy" id="10090"/>
    <lineage>
        <taxon>Eukaryota</taxon>
        <taxon>Metazoa</taxon>
        <taxon>Chordata</taxon>
        <taxon>Craniata</taxon>
        <taxon>Vertebrata</taxon>
        <taxon>Euteleostomi</taxon>
        <taxon>Mammalia</taxon>
        <taxon>Eutheria</taxon>
        <taxon>Euarchontoglires</taxon>
        <taxon>Glires</taxon>
        <taxon>Rodentia</taxon>
        <taxon>Myomorpha</taxon>
        <taxon>Muroidea</taxon>
        <taxon>Muridae</taxon>
        <taxon>Murinae</taxon>
        <taxon>Mus</taxon>
        <taxon>Mus</taxon>
    </lineage>
</organism>
<name>WDR90_MOUSE</name>
<dbReference type="EMBL" id="AK036541">
    <property type="protein sequence ID" value="BAC29467.1"/>
    <property type="molecule type" value="mRNA"/>
</dbReference>
<dbReference type="EMBL" id="AC159277">
    <property type="status" value="NOT_ANNOTATED_CDS"/>
    <property type="molecule type" value="Genomic_DNA"/>
</dbReference>
<dbReference type="EMBL" id="BC043315">
    <property type="protein sequence ID" value="AAH43315.1"/>
    <property type="molecule type" value="mRNA"/>
</dbReference>
<dbReference type="EMBL" id="BC009168">
    <property type="protein sequence ID" value="AAH09168.1"/>
    <property type="molecule type" value="mRNA"/>
</dbReference>
<dbReference type="EMBL" id="BC025468">
    <property type="protein sequence ID" value="AAH25468.1"/>
    <property type="status" value="ALT_INIT"/>
    <property type="molecule type" value="mRNA"/>
</dbReference>
<dbReference type="EMBL" id="AK129465">
    <property type="protein sequence ID" value="BAC98275.1"/>
    <property type="molecule type" value="mRNA"/>
</dbReference>
<dbReference type="RefSeq" id="NP_001157238.1">
    <property type="nucleotide sequence ID" value="NM_001163766.1"/>
</dbReference>
<dbReference type="RefSeq" id="NP_001420336.1">
    <molecule id="Q6ZPG2-1"/>
    <property type="nucleotide sequence ID" value="NM_001433407.1"/>
</dbReference>
<dbReference type="FunCoup" id="Q6ZPG2">
    <property type="interactions" value="520"/>
</dbReference>
<dbReference type="IntAct" id="Q6ZPG2">
    <property type="interactions" value="1"/>
</dbReference>
<dbReference type="STRING" id="10090.ENSMUSP00000078426"/>
<dbReference type="iPTMnet" id="Q6ZPG2"/>
<dbReference type="PhosphoSitePlus" id="Q6ZPG2"/>
<dbReference type="PaxDb" id="10090-ENSMUSP00000078426"/>
<dbReference type="ProteomicsDB" id="299975">
    <molecule id="Q6ZPG2-1"/>
</dbReference>
<dbReference type="ProteomicsDB" id="299976">
    <molecule id="Q6ZPG2-2"/>
</dbReference>
<dbReference type="ProteomicsDB" id="299977">
    <molecule id="Q6ZPG2-3"/>
</dbReference>
<dbReference type="Pumba" id="Q6ZPG2"/>
<dbReference type="Antibodypedia" id="70705">
    <property type="antibodies" value="23 antibodies from 8 providers"/>
</dbReference>
<dbReference type="Ensembl" id="ENSMUST00000176923.9">
    <molecule id="Q6ZPG2-1"/>
    <property type="protein sequence ID" value="ENSMUSP00000135420.2"/>
    <property type="gene ID" value="ENSMUSG00000073434.13"/>
</dbReference>
<dbReference type="GeneID" id="106618"/>
<dbReference type="KEGG" id="mmu:106618"/>
<dbReference type="UCSC" id="uc008bci.2">
    <molecule id="Q6ZPG2-1"/>
    <property type="organism name" value="mouse"/>
</dbReference>
<dbReference type="AGR" id="MGI:1921267"/>
<dbReference type="CTD" id="197335"/>
<dbReference type="MGI" id="MGI:1921267">
    <property type="gene designation" value="Wdr90"/>
</dbReference>
<dbReference type="VEuPathDB" id="HostDB:ENSMUSG00000073434"/>
<dbReference type="eggNOG" id="KOG0266">
    <property type="taxonomic scope" value="Eukaryota"/>
</dbReference>
<dbReference type="eggNOG" id="KOG0267">
    <property type="taxonomic scope" value="Eukaryota"/>
</dbReference>
<dbReference type="eggNOG" id="KOG3213">
    <property type="taxonomic scope" value="Eukaryota"/>
</dbReference>
<dbReference type="GeneTree" id="ENSGT00940000160173"/>
<dbReference type="HOGENOM" id="CLU_002454_0_0_1"/>
<dbReference type="InParanoid" id="Q6ZPG2"/>
<dbReference type="OrthoDB" id="6252103at2759"/>
<dbReference type="PhylomeDB" id="Q6ZPG2"/>
<dbReference type="BioGRID-ORCS" id="106618">
    <property type="hits" value="3 hits in 79 CRISPR screens"/>
</dbReference>
<dbReference type="ChiTaRS" id="Wdr90">
    <property type="organism name" value="mouse"/>
</dbReference>
<dbReference type="PRO" id="PR:Q6ZPG2"/>
<dbReference type="Proteomes" id="UP000000589">
    <property type="component" value="Chromosome 17"/>
</dbReference>
<dbReference type="RNAct" id="Q6ZPG2">
    <property type="molecule type" value="protein"/>
</dbReference>
<dbReference type="Bgee" id="ENSMUSG00000073434">
    <property type="expression patterns" value="Expressed in islet of Langerhans and 77 other cell types or tissues"/>
</dbReference>
<dbReference type="ExpressionAtlas" id="Q6ZPG2">
    <property type="expression patterns" value="baseline and differential"/>
</dbReference>
<dbReference type="GO" id="GO:0034451">
    <property type="term" value="C:centriolar satellite"/>
    <property type="evidence" value="ECO:0000250"/>
    <property type="project" value="UniProtKB"/>
</dbReference>
<dbReference type="GO" id="GO:0005814">
    <property type="term" value="C:centriole"/>
    <property type="evidence" value="ECO:0000250"/>
    <property type="project" value="UniProtKB"/>
</dbReference>
<dbReference type="GO" id="GO:0005737">
    <property type="term" value="C:cytoplasm"/>
    <property type="evidence" value="ECO:0007669"/>
    <property type="project" value="UniProtKB-KW"/>
</dbReference>
<dbReference type="GO" id="GO:0005874">
    <property type="term" value="C:microtubule"/>
    <property type="evidence" value="ECO:0007669"/>
    <property type="project" value="UniProtKB-KW"/>
</dbReference>
<dbReference type="GO" id="GO:0008017">
    <property type="term" value="F:microtubule binding"/>
    <property type="evidence" value="ECO:0000250"/>
    <property type="project" value="UniProtKB"/>
</dbReference>
<dbReference type="GO" id="GO:0061511">
    <property type="term" value="P:centriole elongation"/>
    <property type="evidence" value="ECO:0000250"/>
    <property type="project" value="UniProtKB"/>
</dbReference>
<dbReference type="GO" id="GO:0060271">
    <property type="term" value="P:cilium assembly"/>
    <property type="evidence" value="ECO:0000250"/>
    <property type="project" value="UniProtKB"/>
</dbReference>
<dbReference type="FunFam" id="2.130.10.10:FF:000522">
    <property type="entry name" value="WD repeat domain 90"/>
    <property type="match status" value="1"/>
</dbReference>
<dbReference type="FunFam" id="2.130.10.10:FF:000590">
    <property type="entry name" value="WD repeat domain 90"/>
    <property type="match status" value="1"/>
</dbReference>
<dbReference type="FunFam" id="2.130.10.10:FF:000772">
    <property type="entry name" value="WD repeat domain 90"/>
    <property type="match status" value="1"/>
</dbReference>
<dbReference type="FunFam" id="2.130.10.10:FF:001103">
    <property type="entry name" value="WD repeat domain 90"/>
    <property type="match status" value="1"/>
</dbReference>
<dbReference type="FunFam" id="2.130.10.10:FF:001417">
    <property type="entry name" value="WD repeat domain 90"/>
    <property type="match status" value="1"/>
</dbReference>
<dbReference type="FunFam" id="2.130.10.10:FF:002173">
    <property type="entry name" value="WD repeat domain 90"/>
    <property type="match status" value="1"/>
</dbReference>
<dbReference type="Gene3D" id="2.130.10.10">
    <property type="entry name" value="YVTN repeat-like/Quinoprotein amine dehydrogenase"/>
    <property type="match status" value="7"/>
</dbReference>
<dbReference type="InterPro" id="IPR055439">
    <property type="entry name" value="Beta-prop_EML_1st"/>
</dbReference>
<dbReference type="InterPro" id="IPR055441">
    <property type="entry name" value="Beta-prop_WDR90_POC16_2nd"/>
</dbReference>
<dbReference type="InterPro" id="IPR007714">
    <property type="entry name" value="CFA20_dom"/>
</dbReference>
<dbReference type="InterPro" id="IPR015943">
    <property type="entry name" value="WD40/YVTN_repeat-like_dom_sf"/>
</dbReference>
<dbReference type="InterPro" id="IPR019775">
    <property type="entry name" value="WD40_repeat_CS"/>
</dbReference>
<dbReference type="InterPro" id="IPR036322">
    <property type="entry name" value="WD40_repeat_dom_sf"/>
</dbReference>
<dbReference type="InterPro" id="IPR001680">
    <property type="entry name" value="WD40_rpt"/>
</dbReference>
<dbReference type="InterPro" id="IPR050630">
    <property type="entry name" value="WD_repeat_EMAP"/>
</dbReference>
<dbReference type="InterPro" id="IPR055440">
    <property type="entry name" value="WDR90_beta-prop_4th"/>
</dbReference>
<dbReference type="PANTHER" id="PTHR13720:SF24">
    <property type="entry name" value="WD REPEAT-CONTAINING PROTEIN 90"/>
    <property type="match status" value="1"/>
</dbReference>
<dbReference type="PANTHER" id="PTHR13720">
    <property type="entry name" value="WD-40 REPEAT PROTEIN"/>
    <property type="match status" value="1"/>
</dbReference>
<dbReference type="Pfam" id="PF23409">
    <property type="entry name" value="Beta-prop_EML"/>
    <property type="match status" value="1"/>
</dbReference>
<dbReference type="Pfam" id="PF23393">
    <property type="entry name" value="Beta-prop_WDR90_POC16_2nd"/>
    <property type="match status" value="1"/>
</dbReference>
<dbReference type="Pfam" id="PF05018">
    <property type="entry name" value="CFA20_dom"/>
    <property type="match status" value="1"/>
</dbReference>
<dbReference type="Pfam" id="PF23342">
    <property type="entry name" value="WDR90_beta-prop_4th"/>
    <property type="match status" value="1"/>
</dbReference>
<dbReference type="SMART" id="SM00320">
    <property type="entry name" value="WD40"/>
    <property type="match status" value="21"/>
</dbReference>
<dbReference type="SUPFAM" id="SSF50978">
    <property type="entry name" value="WD40 repeat-like"/>
    <property type="match status" value="4"/>
</dbReference>
<dbReference type="PROSITE" id="PS00678">
    <property type="entry name" value="WD_REPEATS_1"/>
    <property type="match status" value="1"/>
</dbReference>
<dbReference type="PROSITE" id="PS50082">
    <property type="entry name" value="WD_REPEATS_2"/>
    <property type="match status" value="4"/>
</dbReference>
<dbReference type="PROSITE" id="PS50294">
    <property type="entry name" value="WD_REPEATS_REGION"/>
    <property type="match status" value="4"/>
</dbReference>
<reference key="1">
    <citation type="journal article" date="2005" name="Science">
        <title>The transcriptional landscape of the mammalian genome.</title>
        <authorList>
            <person name="Carninci P."/>
            <person name="Kasukawa T."/>
            <person name="Katayama S."/>
            <person name="Gough J."/>
            <person name="Frith M.C."/>
            <person name="Maeda N."/>
            <person name="Oyama R."/>
            <person name="Ravasi T."/>
            <person name="Lenhard B."/>
            <person name="Wells C."/>
            <person name="Kodzius R."/>
            <person name="Shimokawa K."/>
            <person name="Bajic V.B."/>
            <person name="Brenner S.E."/>
            <person name="Batalov S."/>
            <person name="Forrest A.R."/>
            <person name="Zavolan M."/>
            <person name="Davis M.J."/>
            <person name="Wilming L.G."/>
            <person name="Aidinis V."/>
            <person name="Allen J.E."/>
            <person name="Ambesi-Impiombato A."/>
            <person name="Apweiler R."/>
            <person name="Aturaliya R.N."/>
            <person name="Bailey T.L."/>
            <person name="Bansal M."/>
            <person name="Baxter L."/>
            <person name="Beisel K.W."/>
            <person name="Bersano T."/>
            <person name="Bono H."/>
            <person name="Chalk A.M."/>
            <person name="Chiu K.P."/>
            <person name="Choudhary V."/>
            <person name="Christoffels A."/>
            <person name="Clutterbuck D.R."/>
            <person name="Crowe M.L."/>
            <person name="Dalla E."/>
            <person name="Dalrymple B.P."/>
            <person name="de Bono B."/>
            <person name="Della Gatta G."/>
            <person name="di Bernardo D."/>
            <person name="Down T."/>
            <person name="Engstrom P."/>
            <person name="Fagiolini M."/>
            <person name="Faulkner G."/>
            <person name="Fletcher C.F."/>
            <person name="Fukushima T."/>
            <person name="Furuno M."/>
            <person name="Futaki S."/>
            <person name="Gariboldi M."/>
            <person name="Georgii-Hemming P."/>
            <person name="Gingeras T.R."/>
            <person name="Gojobori T."/>
            <person name="Green R.E."/>
            <person name="Gustincich S."/>
            <person name="Harbers M."/>
            <person name="Hayashi Y."/>
            <person name="Hensch T.K."/>
            <person name="Hirokawa N."/>
            <person name="Hill D."/>
            <person name="Huminiecki L."/>
            <person name="Iacono M."/>
            <person name="Ikeo K."/>
            <person name="Iwama A."/>
            <person name="Ishikawa T."/>
            <person name="Jakt M."/>
            <person name="Kanapin A."/>
            <person name="Katoh M."/>
            <person name="Kawasawa Y."/>
            <person name="Kelso J."/>
            <person name="Kitamura H."/>
            <person name="Kitano H."/>
            <person name="Kollias G."/>
            <person name="Krishnan S.P."/>
            <person name="Kruger A."/>
            <person name="Kummerfeld S.K."/>
            <person name="Kurochkin I.V."/>
            <person name="Lareau L.F."/>
            <person name="Lazarevic D."/>
            <person name="Lipovich L."/>
            <person name="Liu J."/>
            <person name="Liuni S."/>
            <person name="McWilliam S."/>
            <person name="Madan Babu M."/>
            <person name="Madera M."/>
            <person name="Marchionni L."/>
            <person name="Matsuda H."/>
            <person name="Matsuzawa S."/>
            <person name="Miki H."/>
            <person name="Mignone F."/>
            <person name="Miyake S."/>
            <person name="Morris K."/>
            <person name="Mottagui-Tabar S."/>
            <person name="Mulder N."/>
            <person name="Nakano N."/>
            <person name="Nakauchi H."/>
            <person name="Ng P."/>
            <person name="Nilsson R."/>
            <person name="Nishiguchi S."/>
            <person name="Nishikawa S."/>
            <person name="Nori F."/>
            <person name="Ohara O."/>
            <person name="Okazaki Y."/>
            <person name="Orlando V."/>
            <person name="Pang K.C."/>
            <person name="Pavan W.J."/>
            <person name="Pavesi G."/>
            <person name="Pesole G."/>
            <person name="Petrovsky N."/>
            <person name="Piazza S."/>
            <person name="Reed J."/>
            <person name="Reid J.F."/>
            <person name="Ring B.Z."/>
            <person name="Ringwald M."/>
            <person name="Rost B."/>
            <person name="Ruan Y."/>
            <person name="Salzberg S.L."/>
            <person name="Sandelin A."/>
            <person name="Schneider C."/>
            <person name="Schoenbach C."/>
            <person name="Sekiguchi K."/>
            <person name="Semple C.A."/>
            <person name="Seno S."/>
            <person name="Sessa L."/>
            <person name="Sheng Y."/>
            <person name="Shibata Y."/>
            <person name="Shimada H."/>
            <person name="Shimada K."/>
            <person name="Silva D."/>
            <person name="Sinclair B."/>
            <person name="Sperling S."/>
            <person name="Stupka E."/>
            <person name="Sugiura K."/>
            <person name="Sultana R."/>
            <person name="Takenaka Y."/>
            <person name="Taki K."/>
            <person name="Tammoja K."/>
            <person name="Tan S.L."/>
            <person name="Tang S."/>
            <person name="Taylor M.S."/>
            <person name="Tegner J."/>
            <person name="Teichmann S.A."/>
            <person name="Ueda H.R."/>
            <person name="van Nimwegen E."/>
            <person name="Verardo R."/>
            <person name="Wei C.L."/>
            <person name="Yagi K."/>
            <person name="Yamanishi H."/>
            <person name="Zabarovsky E."/>
            <person name="Zhu S."/>
            <person name="Zimmer A."/>
            <person name="Hide W."/>
            <person name="Bult C."/>
            <person name="Grimmond S.M."/>
            <person name="Teasdale R.D."/>
            <person name="Liu E.T."/>
            <person name="Brusic V."/>
            <person name="Quackenbush J."/>
            <person name="Wahlestedt C."/>
            <person name="Mattick J.S."/>
            <person name="Hume D.A."/>
            <person name="Kai C."/>
            <person name="Sasaki D."/>
            <person name="Tomaru Y."/>
            <person name="Fukuda S."/>
            <person name="Kanamori-Katayama M."/>
            <person name="Suzuki M."/>
            <person name="Aoki J."/>
            <person name="Arakawa T."/>
            <person name="Iida J."/>
            <person name="Imamura K."/>
            <person name="Itoh M."/>
            <person name="Kato T."/>
            <person name="Kawaji H."/>
            <person name="Kawagashira N."/>
            <person name="Kawashima T."/>
            <person name="Kojima M."/>
            <person name="Kondo S."/>
            <person name="Konno H."/>
            <person name="Nakano K."/>
            <person name="Ninomiya N."/>
            <person name="Nishio T."/>
            <person name="Okada M."/>
            <person name="Plessy C."/>
            <person name="Shibata K."/>
            <person name="Shiraki T."/>
            <person name="Suzuki S."/>
            <person name="Tagami M."/>
            <person name="Waki K."/>
            <person name="Watahiki A."/>
            <person name="Okamura-Oho Y."/>
            <person name="Suzuki H."/>
            <person name="Kawai J."/>
            <person name="Hayashizaki Y."/>
        </authorList>
    </citation>
    <scope>NUCLEOTIDE SEQUENCE [LARGE SCALE MRNA] (ISOFORM 3)</scope>
    <source>
        <strain>C57BL/6J</strain>
        <tissue>Bone</tissue>
    </source>
</reference>
<reference key="2">
    <citation type="journal article" date="2009" name="PLoS Biol.">
        <title>Lineage-specific biology revealed by a finished genome assembly of the mouse.</title>
        <authorList>
            <person name="Church D.M."/>
            <person name="Goodstadt L."/>
            <person name="Hillier L.W."/>
            <person name="Zody M.C."/>
            <person name="Goldstein S."/>
            <person name="She X."/>
            <person name="Bult C.J."/>
            <person name="Agarwala R."/>
            <person name="Cherry J.L."/>
            <person name="DiCuccio M."/>
            <person name="Hlavina W."/>
            <person name="Kapustin Y."/>
            <person name="Meric P."/>
            <person name="Maglott D."/>
            <person name="Birtle Z."/>
            <person name="Marques A.C."/>
            <person name="Graves T."/>
            <person name="Zhou S."/>
            <person name="Teague B."/>
            <person name="Potamousis K."/>
            <person name="Churas C."/>
            <person name="Place M."/>
            <person name="Herschleb J."/>
            <person name="Runnheim R."/>
            <person name="Forrest D."/>
            <person name="Amos-Landgraf J."/>
            <person name="Schwartz D.C."/>
            <person name="Cheng Z."/>
            <person name="Lindblad-Toh K."/>
            <person name="Eichler E.E."/>
            <person name="Ponting C.P."/>
        </authorList>
    </citation>
    <scope>NUCLEOTIDE SEQUENCE [LARGE SCALE GENOMIC DNA]</scope>
    <source>
        <strain>C57BL/6J</strain>
    </source>
</reference>
<reference key="3">
    <citation type="journal article" date="2004" name="Genome Res.">
        <title>The status, quality, and expansion of the NIH full-length cDNA project: the Mammalian Gene Collection (MGC).</title>
        <authorList>
            <consortium name="The MGC Project Team"/>
        </authorList>
    </citation>
    <scope>NUCLEOTIDE SEQUENCE [LARGE SCALE MRNA] (ISOFORM 2)</scope>
    <scope>NUCLEOTIDE SEQUENCE [LARGE SCALE MRNA] OF 1216-1874 (ISOFORM 1)</scope>
    <source>
        <strain>FVB/N</strain>
        <tissue>Mammary tumor</tissue>
    </source>
</reference>
<reference key="4">
    <citation type="journal article" date="2003" name="DNA Res.">
        <title>Prediction of the coding sequences of mouse homologues of KIAA gene: III. The complete nucleotide sequences of 500 mouse KIAA-homologous cDNAs identified by screening of terminal sequences of cDNA clones randomly sampled from size-fractionated libraries.</title>
        <authorList>
            <person name="Okazaki N."/>
            <person name="Kikuno R."/>
            <person name="Ohara R."/>
            <person name="Inamoto S."/>
            <person name="Koseki H."/>
            <person name="Hiraoka S."/>
            <person name="Saga Y."/>
            <person name="Nagase T."/>
            <person name="Ohara O."/>
            <person name="Koga H."/>
        </authorList>
    </citation>
    <scope>NUCLEOTIDE SEQUENCE [LARGE SCALE MRNA] OF 93-1874 (ISOFORM 1)</scope>
    <source>
        <tissue>Embryonic tail</tissue>
    </source>
</reference>
<reference key="5">
    <citation type="journal article" date="2010" name="Cell">
        <title>A tissue-specific atlas of mouse protein phosphorylation and expression.</title>
        <authorList>
            <person name="Huttlin E.L."/>
            <person name="Jedrychowski M.P."/>
            <person name="Elias J.E."/>
            <person name="Goswami T."/>
            <person name="Rad R."/>
            <person name="Beausoleil S.A."/>
            <person name="Villen J."/>
            <person name="Haas W."/>
            <person name="Sowa M.E."/>
            <person name="Gygi S.P."/>
        </authorList>
    </citation>
    <scope>PHOSPHORYLATION [LARGE SCALE ANALYSIS] AT SER-16; SER-20 AND SER-301</scope>
    <scope>IDENTIFICATION BY MASS SPECTROMETRY [LARGE SCALE ANALYSIS]</scope>
    <source>
        <tissue>Lung</tissue>
        <tissue>Testis</tissue>
    </source>
</reference>
<evidence type="ECO:0000250" key="1">
    <source>
        <dbReference type="UniProtKB" id="Q96KV7"/>
    </source>
</evidence>
<evidence type="ECO:0000256" key="2">
    <source>
        <dbReference type="SAM" id="MobiDB-lite"/>
    </source>
</evidence>
<evidence type="ECO:0000303" key="3">
    <source>
    </source>
</evidence>
<evidence type="ECO:0000303" key="4">
    <source>
    </source>
</evidence>
<evidence type="ECO:0000305" key="5"/>
<evidence type="ECO:0007744" key="6">
    <source>
    </source>
</evidence>
<gene>
    <name type="primary">Wdr90</name>
    <name type="synonym">Kiaa1924</name>
</gene>
<protein>
    <recommendedName>
        <fullName>WD repeat-containing protein 90</fullName>
    </recommendedName>
</protein>
<keyword id="KW-0025">Alternative splicing</keyword>
<keyword id="KW-0970">Cilium biogenesis/degradation</keyword>
<keyword id="KW-0963">Cytoplasm</keyword>
<keyword id="KW-0206">Cytoskeleton</keyword>
<keyword id="KW-0493">Microtubule</keyword>
<keyword id="KW-0597">Phosphoprotein</keyword>
<keyword id="KW-1185">Reference proteome</keyword>
<keyword id="KW-0677">Repeat</keyword>
<keyword id="KW-0853">WD repeat</keyword>
<sequence length="1874" mass="202972">MAGGSGARETRCRQGSRPGSPGSEVPAASVTGPRAEARPAGGGGGSRRAAPDRCSGGVPSAAWQHPFLNVFRHFRVDEWKRSSKEGDVAVVTDKVLKSAVYRIRGSVSASNYIQLPRTSTQSLGLTGRYLYVLFRPVPTKHFVIHLDVSTEDGQVIRVSFSNLFKEFKSSTTWLQFPFVFETKTPRRDLAGVALPRARWTCLQLDLRDILMFYLGRHYSHLKSIRLCASLLVRNLYTSDLCFDPAVTVTEARRAKLSVNPMPREMAFPVPKGESWHDNYIHVRFPSDCSKVPDEQDEKSCSPPEAVFLGRMSRHLPHPGVLGKPLLSSKSPVAQACSSALPCQVLSASSRLPEVSRTYRYREVSSVSASSIQSQRPSVRDEVPDAHTVSGERHVLADRSSGVPMALEDIGSCRLFLPDPVLRLKGVIGFGGHSTQWALWTKDGVAVVYPCHAVIIVLQIDTGQQRFFLGHTDKVSALALNGSDTLLASAQVQPPSMVRLWDFQTGSCLSLFRSPLHTICSLSFSGSGALLCGVGKDRHGRTVVVAWSTEQAGLGGEVVVLAKVHTDFDIRAFQVAFFDETRMASCGRGSVRLWRLRGGVLRSCAVDLGEYCSLELTDLAFAQALDGHCAPSAGTLFVCSHSGHILEIDHQRMSVQHVRRLLPARSPGAPLAEKQNFSVGSGIAISSLSVSTATCAVGSEDGYLRLWPLDFSSVLLEAEHDGPVSSVSFSPDGLRVLSTTTSGHLGFLDVPSREYTVLARSHMAPVLALSTEPNRGQMATVSLDHTVRIWDLATLQQLYDFSSSEDTPCAVAFHPTMPNFFCGFSSGAVRSFSLESSGVLVEHTRHRGAITSLVITLDGRFLFSSCSQGSLVQYSCADSQCCVLRVAANMVCQDGRPNPNILAVSGDSCRLAFVGPSKCMVTIVESASLDELLRVDVSTLNLASNHLDWAVAICFSPGNSGHLLVSTSSNKVVVLDAVSGHTLRELSSVRSRACCSLALSEDAHLLLAATDRTITVWDYPTQANPSCQVYIGHSEPVHAVAFTPDQLQVISVGDAIFLWDILATPERDGGDHEAPPGHEAGSSSGQLDDLASGASGLPRQQVPIPFQALPPPLSSHDRLLDGSTGTFSTSDEEGLCEENHVSEALLQGQAPTPHVLVDREASGAGDAPRETAGSSWTPAERPSPHSHMSEWSLRSGKAGLPTRPDSYKHFTPRYKTSPRVKSVYFPPIGRERLRLKAIVGYNGNGRANMVWRPDTGFFAYTCGRLVVVEDLHSGTQRHWLGHSQEISTLALNQDGQILASASCCGNTAARCQIRIWDVPKGLCRHLLSHHDTAVQALAFSPDDEFLVTLGDYADRNLALWSMATYELLSSTRLLEPVHGVAFNPWDANELICVGTNAITFWLLQHHGADTCFQVHREPIPEELGASELTSLCYGASPLLYCGSSSGQVCVWDTGTGHCFLAWEADDGEIGVLLCSGSRLISGSNTKRLRLWAVGVVPELRRKGSSARSSSVFMERELTLDGAVVSASFDSGMDMGVVGTTAGTIWYISWTEGTSTRLISGHRTKVNEVVFSPGESHCATCGEDGSVRVWSLASMELVIQFQVLNQSCLCLAWTPPSCELPEQQQVVAGYSDGTLRVFSISRTAMELKMHPHRTALTAIAFSTDGQTILSGDKDGLVAISHPCTGMTFRVLSDHRGAPISAIQSTSKEYGDLGVEGVELWLAASGDQRVSIWVSDWLRDRCELLEWLSFPAPAVSEAPGLLPPSLAAFCPWDKAILVCVGLGAHEEVIFYSLRQKQVIQKTPLPFFAMSLSLSPGSQLMVVGFAECMMRLLDCASGTAQDLEGHDDSVHLCRFTPSGRLLFTAAHNEILVWEVTDP</sequence>
<proteinExistence type="evidence at protein level"/>